<keyword id="KW-0259">Enterobactin biosynthesis</keyword>
<keyword id="KW-0460">Magnesium</keyword>
<keyword id="KW-0472">Membrane</keyword>
<keyword id="KW-0479">Metal-binding</keyword>
<keyword id="KW-0808">Transferase</keyword>
<sequence length="232" mass="25556">MLTSHFPLSFAGHRLHIVDFDASSFHEHDLLWLPHHDRLRSAGRKRKAEHLAGRIAAVHALRRWASGVPGIGDKRQPLWPDDLFGSISHCASTALAVISRQRVGVDIEKIMSQHTATELAVIIDSDEPQILQASSLPFPLALTLAFSAKESVYKAFSDRVSLPGFDSAKVTSLTATHISLHLLPAFAATMAERTVRTEWFQRGNSVITLVSALTRWPHDRSAPASILSAIPR</sequence>
<gene>
    <name evidence="2" type="primary">entD</name>
</gene>
<comment type="function">
    <text evidence="2">Involved in the biosynthesis of the siderophore enterobactin (enterochelin), which is a macrocyclic trimeric lactone of N-(2,3-dihydroxybenzoyl)-serine. The serine trilactone serves as a scaffolding for the three catechol functionalities that provide hexadentate coordination for the tightly ligated iron(2+) atoms. Plays an essential role in the assembly of the enterobactin by catalyzing the transfer of the 4'-phosphopantetheine (Ppant) moiety from coenzyme A to the apo-domains of both EntB (ArCP domain) and EntF (PCP domain) to yield their holo-forms which make them competent for the activation of 2,3-dihydroxybenzoate (DHB) and L-serine, respectively.</text>
</comment>
<comment type="catalytic activity">
    <reaction evidence="2">
        <text>apo-[aryl-carrier protein] + CoA = holo-[aryl-carrier protein] + adenosine 3',5'-bisphosphate + H(+)</text>
        <dbReference type="Rhea" id="RHEA:48404"/>
        <dbReference type="Rhea" id="RHEA-COMP:15903"/>
        <dbReference type="Rhea" id="RHEA-COMP:17557"/>
        <dbReference type="ChEBI" id="CHEBI:15378"/>
        <dbReference type="ChEBI" id="CHEBI:29999"/>
        <dbReference type="ChEBI" id="CHEBI:57287"/>
        <dbReference type="ChEBI" id="CHEBI:58343"/>
        <dbReference type="ChEBI" id="CHEBI:64479"/>
    </reaction>
</comment>
<comment type="catalytic activity">
    <reaction evidence="2">
        <text>apo-[peptidyl-carrier protein] + CoA = holo-[peptidyl-carrier protein] + adenosine 3',5'-bisphosphate + H(+)</text>
        <dbReference type="Rhea" id="RHEA:46228"/>
        <dbReference type="Rhea" id="RHEA-COMP:11479"/>
        <dbReference type="Rhea" id="RHEA-COMP:11480"/>
        <dbReference type="ChEBI" id="CHEBI:15378"/>
        <dbReference type="ChEBI" id="CHEBI:29999"/>
        <dbReference type="ChEBI" id="CHEBI:57287"/>
        <dbReference type="ChEBI" id="CHEBI:58343"/>
        <dbReference type="ChEBI" id="CHEBI:64479"/>
    </reaction>
</comment>
<comment type="cofactor">
    <cofactor evidence="3">
        <name>Mg(2+)</name>
        <dbReference type="ChEBI" id="CHEBI:18420"/>
    </cofactor>
</comment>
<comment type="pathway">
    <text evidence="2">Siderophore biosynthesis; enterobactin biosynthesis.</text>
</comment>
<comment type="subunit">
    <text evidence="2">EntB, EntD, EntE, and EntF form a multienzyme complex called enterobactin synthase.</text>
</comment>
<comment type="subcellular location">
    <subcellularLocation>
        <location evidence="2">Membrane</location>
    </subcellularLocation>
</comment>
<comment type="similarity">
    <text evidence="2">Belongs to the P-Pant transferase superfamily. EntD family.</text>
</comment>
<comment type="sequence caution" evidence="4">
    <conflict type="frameshift">
        <sequence resource="EMBL-CDS" id="AAA97935"/>
    </conflict>
</comment>
<proteinExistence type="inferred from homology"/>
<protein>
    <recommendedName>
        <fullName evidence="2">Enterobactin synthase component D</fullName>
    </recommendedName>
    <alternativeName>
        <fullName evidence="2">4'-phosphopantetheinyl transferase EntD</fullName>
        <ecNumber evidence="2">2.7.8.-</ecNumber>
    </alternativeName>
    <alternativeName>
        <fullName evidence="2">Enterochelin synthase D</fullName>
    </alternativeName>
</protein>
<feature type="chain" id="PRO_0000206071" description="Enterobactin synthase component D">
    <location>
        <begin position="1"/>
        <end position="232"/>
    </location>
</feature>
<feature type="binding site" evidence="1">
    <location>
        <position position="106"/>
    </location>
    <ligand>
        <name>Mg(2+)</name>
        <dbReference type="ChEBI" id="CHEBI:18420"/>
    </ligand>
</feature>
<feature type="binding site" evidence="1">
    <location>
        <position position="108"/>
    </location>
    <ligand>
        <name>Mg(2+)</name>
        <dbReference type="ChEBI" id="CHEBI:18420"/>
    </ligand>
</feature>
<feature type="binding site" evidence="1">
    <location>
        <position position="150"/>
    </location>
    <ligand>
        <name>Mg(2+)</name>
        <dbReference type="ChEBI" id="CHEBI:18420"/>
    </ligand>
</feature>
<reference key="1">
    <citation type="submission" date="1996-03" db="EMBL/GenBank/DDBJ databases">
        <title>entD enterobactin biosynthesis genes of enteric bacteria.</title>
        <authorList>
            <person name="Johansen K.A."/>
        </authorList>
    </citation>
    <scope>NUCLEOTIDE SEQUENCE [GENOMIC DNA]</scope>
</reference>
<accession>Q53636</accession>
<organism>
    <name type="scientific">Salmonella austin</name>
    <dbReference type="NCBI Taxonomy" id="47066"/>
    <lineage>
        <taxon>Bacteria</taxon>
        <taxon>Pseudomonadati</taxon>
        <taxon>Pseudomonadota</taxon>
        <taxon>Gammaproteobacteria</taxon>
        <taxon>Enterobacterales</taxon>
        <taxon>Enterobacteriaceae</taxon>
        <taxon>Salmonella</taxon>
    </lineage>
</organism>
<name>ENTD_SALAS</name>
<dbReference type="EC" id="2.7.8.-" evidence="2"/>
<dbReference type="EMBL" id="U52685">
    <property type="protein sequence ID" value="AAA97935.1"/>
    <property type="status" value="ALT_FRAME"/>
    <property type="molecule type" value="Genomic_DNA"/>
</dbReference>
<dbReference type="SMR" id="Q53636"/>
<dbReference type="UniPathway" id="UPA00017"/>
<dbReference type="GO" id="GO:0009366">
    <property type="term" value="C:enterobactin synthetase complex"/>
    <property type="evidence" value="ECO:0000250"/>
    <property type="project" value="UniProtKB"/>
</dbReference>
<dbReference type="GO" id="GO:0005886">
    <property type="term" value="C:plasma membrane"/>
    <property type="evidence" value="ECO:0000250"/>
    <property type="project" value="UniProtKB"/>
</dbReference>
<dbReference type="GO" id="GO:0008897">
    <property type="term" value="F:holo-[acyl-carrier-protein] synthase activity"/>
    <property type="evidence" value="ECO:0000250"/>
    <property type="project" value="UniProtKB"/>
</dbReference>
<dbReference type="GO" id="GO:0000287">
    <property type="term" value="F:magnesium ion binding"/>
    <property type="evidence" value="ECO:0007669"/>
    <property type="project" value="InterPro"/>
</dbReference>
<dbReference type="GO" id="GO:0009239">
    <property type="term" value="P:enterobactin biosynthetic process"/>
    <property type="evidence" value="ECO:0000250"/>
    <property type="project" value="UniProtKB"/>
</dbReference>
<dbReference type="FunFam" id="3.90.470.20:FF:000012">
    <property type="entry name" value="Enterobactin synthase component D"/>
    <property type="match status" value="1"/>
</dbReference>
<dbReference type="Gene3D" id="3.90.470.20">
    <property type="entry name" value="4'-phosphopantetheinyl transferase domain"/>
    <property type="match status" value="1"/>
</dbReference>
<dbReference type="InterPro" id="IPR008278">
    <property type="entry name" value="4-PPantetheinyl_Trfase_dom"/>
</dbReference>
<dbReference type="InterPro" id="IPR037143">
    <property type="entry name" value="4-PPantetheinyl_Trfase_dom_sf"/>
</dbReference>
<dbReference type="InterPro" id="IPR041354">
    <property type="entry name" value="4PPT_N"/>
</dbReference>
<dbReference type="InterPro" id="IPR003542">
    <property type="entry name" value="Enbac_synth_compD-like"/>
</dbReference>
<dbReference type="NCBIfam" id="NF007604">
    <property type="entry name" value="PRK10251.1"/>
    <property type="match status" value="1"/>
</dbReference>
<dbReference type="PANTHER" id="PTHR38096">
    <property type="entry name" value="ENTEROBACTIN SYNTHASE COMPONENT D"/>
    <property type="match status" value="1"/>
</dbReference>
<dbReference type="PANTHER" id="PTHR38096:SF1">
    <property type="entry name" value="ENTEROBACTIN SYNTHASE COMPONENT D"/>
    <property type="match status" value="1"/>
</dbReference>
<dbReference type="Pfam" id="PF17837">
    <property type="entry name" value="4PPT_N"/>
    <property type="match status" value="1"/>
</dbReference>
<dbReference type="Pfam" id="PF01648">
    <property type="entry name" value="ACPS"/>
    <property type="match status" value="1"/>
</dbReference>
<dbReference type="PRINTS" id="PR01399">
    <property type="entry name" value="ENTSNTHTASED"/>
</dbReference>
<dbReference type="SUPFAM" id="SSF56214">
    <property type="entry name" value="4'-phosphopantetheinyl transferase"/>
    <property type="match status" value="1"/>
</dbReference>
<evidence type="ECO:0000250" key="1"/>
<evidence type="ECO:0000250" key="2">
    <source>
        <dbReference type="UniProtKB" id="P19925"/>
    </source>
</evidence>
<evidence type="ECO:0000250" key="3">
    <source>
        <dbReference type="UniProtKB" id="P24224"/>
    </source>
</evidence>
<evidence type="ECO:0000305" key="4"/>